<protein>
    <recommendedName>
        <fullName evidence="1">Leucyl/phenylalanyl-tRNA--protein transferase</fullName>
        <ecNumber evidence="1">2.3.2.6</ecNumber>
    </recommendedName>
    <alternativeName>
        <fullName evidence="1">L/F-transferase</fullName>
    </alternativeName>
    <alternativeName>
        <fullName evidence="1">Leucyltransferase</fullName>
    </alternativeName>
    <alternativeName>
        <fullName evidence="1">Phenyalanyltransferase</fullName>
    </alternativeName>
</protein>
<accession>Q7NLT7</accession>
<comment type="function">
    <text evidence="1">Functions in the N-end rule pathway of protein degradation where it conjugates Leu, Phe and, less efficiently, Met from aminoacyl-tRNAs to the N-termini of proteins containing an N-terminal arginine or lysine.</text>
</comment>
<comment type="catalytic activity">
    <reaction evidence="1">
        <text>N-terminal L-lysyl-[protein] + L-leucyl-tRNA(Leu) = N-terminal L-leucyl-L-lysyl-[protein] + tRNA(Leu) + H(+)</text>
        <dbReference type="Rhea" id="RHEA:12340"/>
        <dbReference type="Rhea" id="RHEA-COMP:9613"/>
        <dbReference type="Rhea" id="RHEA-COMP:9622"/>
        <dbReference type="Rhea" id="RHEA-COMP:12670"/>
        <dbReference type="Rhea" id="RHEA-COMP:12671"/>
        <dbReference type="ChEBI" id="CHEBI:15378"/>
        <dbReference type="ChEBI" id="CHEBI:65249"/>
        <dbReference type="ChEBI" id="CHEBI:78442"/>
        <dbReference type="ChEBI" id="CHEBI:78494"/>
        <dbReference type="ChEBI" id="CHEBI:133043"/>
        <dbReference type="EC" id="2.3.2.6"/>
    </reaction>
</comment>
<comment type="catalytic activity">
    <reaction evidence="1">
        <text>N-terminal L-arginyl-[protein] + L-leucyl-tRNA(Leu) = N-terminal L-leucyl-L-arginyl-[protein] + tRNA(Leu) + H(+)</text>
        <dbReference type="Rhea" id="RHEA:50416"/>
        <dbReference type="Rhea" id="RHEA-COMP:9613"/>
        <dbReference type="Rhea" id="RHEA-COMP:9622"/>
        <dbReference type="Rhea" id="RHEA-COMP:12672"/>
        <dbReference type="Rhea" id="RHEA-COMP:12673"/>
        <dbReference type="ChEBI" id="CHEBI:15378"/>
        <dbReference type="ChEBI" id="CHEBI:64719"/>
        <dbReference type="ChEBI" id="CHEBI:78442"/>
        <dbReference type="ChEBI" id="CHEBI:78494"/>
        <dbReference type="ChEBI" id="CHEBI:133044"/>
        <dbReference type="EC" id="2.3.2.6"/>
    </reaction>
</comment>
<comment type="catalytic activity">
    <reaction evidence="1">
        <text>L-phenylalanyl-tRNA(Phe) + an N-terminal L-alpha-aminoacyl-[protein] = an N-terminal L-phenylalanyl-L-alpha-aminoacyl-[protein] + tRNA(Phe)</text>
        <dbReference type="Rhea" id="RHEA:43632"/>
        <dbReference type="Rhea" id="RHEA-COMP:9668"/>
        <dbReference type="Rhea" id="RHEA-COMP:9699"/>
        <dbReference type="Rhea" id="RHEA-COMP:10636"/>
        <dbReference type="Rhea" id="RHEA-COMP:10637"/>
        <dbReference type="ChEBI" id="CHEBI:78442"/>
        <dbReference type="ChEBI" id="CHEBI:78531"/>
        <dbReference type="ChEBI" id="CHEBI:78597"/>
        <dbReference type="ChEBI" id="CHEBI:83561"/>
        <dbReference type="EC" id="2.3.2.6"/>
    </reaction>
</comment>
<comment type="subcellular location">
    <subcellularLocation>
        <location evidence="1">Cytoplasm</location>
    </subcellularLocation>
</comment>
<comment type="similarity">
    <text evidence="1">Belongs to the L/F-transferase family.</text>
</comment>
<organism>
    <name type="scientific">Gloeobacter violaceus (strain ATCC 29082 / PCC 7421)</name>
    <dbReference type="NCBI Taxonomy" id="251221"/>
    <lineage>
        <taxon>Bacteria</taxon>
        <taxon>Bacillati</taxon>
        <taxon>Cyanobacteriota</taxon>
        <taxon>Cyanophyceae</taxon>
        <taxon>Gloeobacterales</taxon>
        <taxon>Gloeobacteraceae</taxon>
        <taxon>Gloeobacter</taxon>
    </lineage>
</organism>
<gene>
    <name evidence="1" type="primary">aat</name>
    <name type="ordered locus">glr1034</name>
</gene>
<evidence type="ECO:0000255" key="1">
    <source>
        <dbReference type="HAMAP-Rule" id="MF_00688"/>
    </source>
</evidence>
<sequence length="193" mass="22527">MLVTLTPELLLQAYTQGFFPMAEGQGQRIYWYEPDPRAVFELDKVHFSKRLLRVIRQERFEIRYSTAFERVIRACADRPSTWISEEIIRTYIRLYRTGYGQSVESWLDGELVGGLYGVSLGGAFFGESMFCRVSDASKVAFFHLVERLRGRGFALLDTQFANEHLVQFHVVEIPRREYRQRLKGALALPCKFR</sequence>
<name>LFTR_GLOVI</name>
<keyword id="KW-0012">Acyltransferase</keyword>
<keyword id="KW-0963">Cytoplasm</keyword>
<keyword id="KW-1185">Reference proteome</keyword>
<keyword id="KW-0808">Transferase</keyword>
<dbReference type="EC" id="2.3.2.6" evidence="1"/>
<dbReference type="EMBL" id="BA000045">
    <property type="protein sequence ID" value="BAC88975.1"/>
    <property type="molecule type" value="Genomic_DNA"/>
</dbReference>
<dbReference type="RefSeq" id="NP_923980.1">
    <property type="nucleotide sequence ID" value="NC_005125.1"/>
</dbReference>
<dbReference type="RefSeq" id="WP_011141036.1">
    <property type="nucleotide sequence ID" value="NC_005125.1"/>
</dbReference>
<dbReference type="SMR" id="Q7NLT7"/>
<dbReference type="STRING" id="251221.gene:10758512"/>
<dbReference type="EnsemblBacteria" id="BAC88975">
    <property type="protein sequence ID" value="BAC88975"/>
    <property type="gene ID" value="BAC88975"/>
</dbReference>
<dbReference type="KEGG" id="gvi:glr1034"/>
<dbReference type="PATRIC" id="fig|251221.4.peg.1059"/>
<dbReference type="eggNOG" id="COG2360">
    <property type="taxonomic scope" value="Bacteria"/>
</dbReference>
<dbReference type="HOGENOM" id="CLU_075045_1_1_3"/>
<dbReference type="InParanoid" id="Q7NLT7"/>
<dbReference type="OrthoDB" id="9790282at2"/>
<dbReference type="PhylomeDB" id="Q7NLT7"/>
<dbReference type="Proteomes" id="UP000000557">
    <property type="component" value="Chromosome"/>
</dbReference>
<dbReference type="GO" id="GO:0005737">
    <property type="term" value="C:cytoplasm"/>
    <property type="evidence" value="ECO:0000318"/>
    <property type="project" value="GO_Central"/>
</dbReference>
<dbReference type="GO" id="GO:0008914">
    <property type="term" value="F:leucyl-tRNA--protein transferase activity"/>
    <property type="evidence" value="ECO:0000318"/>
    <property type="project" value="GO_Central"/>
</dbReference>
<dbReference type="GO" id="GO:0030163">
    <property type="term" value="P:protein catabolic process"/>
    <property type="evidence" value="ECO:0007669"/>
    <property type="project" value="UniProtKB-UniRule"/>
</dbReference>
<dbReference type="FunFam" id="3.30.70.3550:FF:000003">
    <property type="entry name" value="Leucyl/phenylalanyl-tRNA--protein transferase"/>
    <property type="match status" value="1"/>
</dbReference>
<dbReference type="FunFam" id="3.40.630.70:FF:000001">
    <property type="entry name" value="Leucyl/phenylalanyl-tRNA--protein transferase"/>
    <property type="match status" value="1"/>
</dbReference>
<dbReference type="Gene3D" id="3.40.630.70">
    <property type="entry name" value="Leucyl/phenylalanyl-tRNA-protein transferase, C-terminal domain"/>
    <property type="match status" value="1"/>
</dbReference>
<dbReference type="Gene3D" id="3.30.70.3550">
    <property type="entry name" value="Leucyl/phenylalanyl-tRNA-protein transferase, N-terminal domain"/>
    <property type="match status" value="1"/>
</dbReference>
<dbReference type="HAMAP" id="MF_00688">
    <property type="entry name" value="Leu_Phe_trans"/>
    <property type="match status" value="1"/>
</dbReference>
<dbReference type="InterPro" id="IPR016181">
    <property type="entry name" value="Acyl_CoA_acyltransferase"/>
</dbReference>
<dbReference type="InterPro" id="IPR004616">
    <property type="entry name" value="Leu/Phe-tRNA_Trfase"/>
</dbReference>
<dbReference type="InterPro" id="IPR042203">
    <property type="entry name" value="Leu/Phe-tRNA_Trfase_C"/>
</dbReference>
<dbReference type="InterPro" id="IPR042221">
    <property type="entry name" value="Leu/Phe-tRNA_Trfase_N"/>
</dbReference>
<dbReference type="NCBIfam" id="TIGR00667">
    <property type="entry name" value="aat"/>
    <property type="match status" value="1"/>
</dbReference>
<dbReference type="PANTHER" id="PTHR30098">
    <property type="entry name" value="LEUCYL/PHENYLALANYL-TRNA--PROTEIN TRANSFERASE"/>
    <property type="match status" value="1"/>
</dbReference>
<dbReference type="PANTHER" id="PTHR30098:SF2">
    <property type="entry name" value="LEUCYL_PHENYLALANYL-TRNA--PROTEIN TRANSFERASE"/>
    <property type="match status" value="1"/>
</dbReference>
<dbReference type="Pfam" id="PF03588">
    <property type="entry name" value="Leu_Phe_trans"/>
    <property type="match status" value="1"/>
</dbReference>
<dbReference type="SUPFAM" id="SSF55729">
    <property type="entry name" value="Acyl-CoA N-acyltransferases (Nat)"/>
    <property type="match status" value="1"/>
</dbReference>
<reference key="1">
    <citation type="journal article" date="2003" name="DNA Res.">
        <title>Complete genome structure of Gloeobacter violaceus PCC 7421, a cyanobacterium that lacks thylakoids.</title>
        <authorList>
            <person name="Nakamura Y."/>
            <person name="Kaneko T."/>
            <person name="Sato S."/>
            <person name="Mimuro M."/>
            <person name="Miyashita H."/>
            <person name="Tsuchiya T."/>
            <person name="Sasamoto S."/>
            <person name="Watanabe A."/>
            <person name="Kawashima K."/>
            <person name="Kishida Y."/>
            <person name="Kiyokawa C."/>
            <person name="Kohara M."/>
            <person name="Matsumoto M."/>
            <person name="Matsuno A."/>
            <person name="Nakazaki N."/>
            <person name="Shimpo S."/>
            <person name="Takeuchi C."/>
            <person name="Yamada M."/>
            <person name="Tabata S."/>
        </authorList>
    </citation>
    <scope>NUCLEOTIDE SEQUENCE [LARGE SCALE GENOMIC DNA]</scope>
    <source>
        <strain>ATCC 29082 / PCC 7421</strain>
    </source>
</reference>
<proteinExistence type="inferred from homology"/>
<feature type="chain" id="PRO_0000207221" description="Leucyl/phenylalanyl-tRNA--protein transferase">
    <location>
        <begin position="1"/>
        <end position="193"/>
    </location>
</feature>